<proteinExistence type="inferred from homology"/>
<keyword id="KW-0687">Ribonucleoprotein</keyword>
<keyword id="KW-0689">Ribosomal protein</keyword>
<keyword id="KW-0694">RNA-binding</keyword>
<keyword id="KW-0699">rRNA-binding</keyword>
<protein>
    <recommendedName>
        <fullName evidence="1">Small ribosomal subunit protein uS19</fullName>
    </recommendedName>
    <alternativeName>
        <fullName evidence="2">30S ribosomal protein S19</fullName>
    </alternativeName>
</protein>
<sequence length="89" mass="9752">MARSLKKGPFVDHHLAKKVESAAGSKKPIKTWSRRSMILPEMVGITIAVHNGKNHIPVLVNENMVGHKLGEFAVTRTFKGHGGDKKSGR</sequence>
<gene>
    <name evidence="1" type="primary">rpsS</name>
    <name type="ordered locus">XAC0976</name>
</gene>
<feature type="chain" id="PRO_0000129942" description="Small ribosomal subunit protein uS19">
    <location>
        <begin position="1"/>
        <end position="89"/>
    </location>
</feature>
<accession>Q8PNS0</accession>
<dbReference type="EMBL" id="AE008923">
    <property type="protein sequence ID" value="AAM35859.1"/>
    <property type="molecule type" value="Genomic_DNA"/>
</dbReference>
<dbReference type="RefSeq" id="WP_005917128.1">
    <property type="nucleotide sequence ID" value="NC_003919.1"/>
</dbReference>
<dbReference type="SMR" id="Q8PNS0"/>
<dbReference type="GeneID" id="97509340"/>
<dbReference type="KEGG" id="xac:XAC0976"/>
<dbReference type="eggNOG" id="COG0185">
    <property type="taxonomic scope" value="Bacteria"/>
</dbReference>
<dbReference type="HOGENOM" id="CLU_144911_0_1_6"/>
<dbReference type="Proteomes" id="UP000000576">
    <property type="component" value="Chromosome"/>
</dbReference>
<dbReference type="GO" id="GO:0005737">
    <property type="term" value="C:cytoplasm"/>
    <property type="evidence" value="ECO:0007669"/>
    <property type="project" value="UniProtKB-ARBA"/>
</dbReference>
<dbReference type="GO" id="GO:0015935">
    <property type="term" value="C:small ribosomal subunit"/>
    <property type="evidence" value="ECO:0007669"/>
    <property type="project" value="InterPro"/>
</dbReference>
<dbReference type="GO" id="GO:0019843">
    <property type="term" value="F:rRNA binding"/>
    <property type="evidence" value="ECO:0007669"/>
    <property type="project" value="UniProtKB-UniRule"/>
</dbReference>
<dbReference type="GO" id="GO:0003735">
    <property type="term" value="F:structural constituent of ribosome"/>
    <property type="evidence" value="ECO:0007669"/>
    <property type="project" value="InterPro"/>
</dbReference>
<dbReference type="GO" id="GO:0000028">
    <property type="term" value="P:ribosomal small subunit assembly"/>
    <property type="evidence" value="ECO:0007669"/>
    <property type="project" value="TreeGrafter"/>
</dbReference>
<dbReference type="GO" id="GO:0006412">
    <property type="term" value="P:translation"/>
    <property type="evidence" value="ECO:0007669"/>
    <property type="project" value="UniProtKB-UniRule"/>
</dbReference>
<dbReference type="FunFam" id="3.30.860.10:FF:000001">
    <property type="entry name" value="30S ribosomal protein S19"/>
    <property type="match status" value="1"/>
</dbReference>
<dbReference type="Gene3D" id="3.30.860.10">
    <property type="entry name" value="30s Ribosomal Protein S19, Chain A"/>
    <property type="match status" value="1"/>
</dbReference>
<dbReference type="HAMAP" id="MF_00531">
    <property type="entry name" value="Ribosomal_uS19"/>
    <property type="match status" value="1"/>
</dbReference>
<dbReference type="InterPro" id="IPR002222">
    <property type="entry name" value="Ribosomal_uS19"/>
</dbReference>
<dbReference type="InterPro" id="IPR005732">
    <property type="entry name" value="Ribosomal_uS19_bac-type"/>
</dbReference>
<dbReference type="InterPro" id="IPR020934">
    <property type="entry name" value="Ribosomal_uS19_CS"/>
</dbReference>
<dbReference type="InterPro" id="IPR023575">
    <property type="entry name" value="Ribosomal_uS19_SF"/>
</dbReference>
<dbReference type="NCBIfam" id="TIGR01050">
    <property type="entry name" value="rpsS_bact"/>
    <property type="match status" value="1"/>
</dbReference>
<dbReference type="PANTHER" id="PTHR11880">
    <property type="entry name" value="RIBOSOMAL PROTEIN S19P FAMILY MEMBER"/>
    <property type="match status" value="1"/>
</dbReference>
<dbReference type="PANTHER" id="PTHR11880:SF8">
    <property type="entry name" value="SMALL RIBOSOMAL SUBUNIT PROTEIN US19M"/>
    <property type="match status" value="1"/>
</dbReference>
<dbReference type="Pfam" id="PF00203">
    <property type="entry name" value="Ribosomal_S19"/>
    <property type="match status" value="1"/>
</dbReference>
<dbReference type="PIRSF" id="PIRSF002144">
    <property type="entry name" value="Ribosomal_S19"/>
    <property type="match status" value="1"/>
</dbReference>
<dbReference type="PRINTS" id="PR00975">
    <property type="entry name" value="RIBOSOMALS19"/>
</dbReference>
<dbReference type="SUPFAM" id="SSF54570">
    <property type="entry name" value="Ribosomal protein S19"/>
    <property type="match status" value="1"/>
</dbReference>
<dbReference type="PROSITE" id="PS00323">
    <property type="entry name" value="RIBOSOMAL_S19"/>
    <property type="match status" value="1"/>
</dbReference>
<organism>
    <name type="scientific">Xanthomonas axonopodis pv. citri (strain 306)</name>
    <dbReference type="NCBI Taxonomy" id="190486"/>
    <lineage>
        <taxon>Bacteria</taxon>
        <taxon>Pseudomonadati</taxon>
        <taxon>Pseudomonadota</taxon>
        <taxon>Gammaproteobacteria</taxon>
        <taxon>Lysobacterales</taxon>
        <taxon>Lysobacteraceae</taxon>
        <taxon>Xanthomonas</taxon>
    </lineage>
</organism>
<reference key="1">
    <citation type="journal article" date="2002" name="Nature">
        <title>Comparison of the genomes of two Xanthomonas pathogens with differing host specificities.</title>
        <authorList>
            <person name="da Silva A.C.R."/>
            <person name="Ferro J.A."/>
            <person name="Reinach F.C."/>
            <person name="Farah C.S."/>
            <person name="Furlan L.R."/>
            <person name="Quaggio R.B."/>
            <person name="Monteiro-Vitorello C.B."/>
            <person name="Van Sluys M.A."/>
            <person name="Almeida N.F. Jr."/>
            <person name="Alves L.M.C."/>
            <person name="do Amaral A.M."/>
            <person name="Bertolini M.C."/>
            <person name="Camargo L.E.A."/>
            <person name="Camarotte G."/>
            <person name="Cannavan F."/>
            <person name="Cardozo J."/>
            <person name="Chambergo F."/>
            <person name="Ciapina L.P."/>
            <person name="Cicarelli R.M.B."/>
            <person name="Coutinho L.L."/>
            <person name="Cursino-Santos J.R."/>
            <person name="El-Dorry H."/>
            <person name="Faria J.B."/>
            <person name="Ferreira A.J.S."/>
            <person name="Ferreira R.C.C."/>
            <person name="Ferro M.I.T."/>
            <person name="Formighieri E.F."/>
            <person name="Franco M.C."/>
            <person name="Greggio C.C."/>
            <person name="Gruber A."/>
            <person name="Katsuyama A.M."/>
            <person name="Kishi L.T."/>
            <person name="Leite R.P."/>
            <person name="Lemos E.G.M."/>
            <person name="Lemos M.V.F."/>
            <person name="Locali E.C."/>
            <person name="Machado M.A."/>
            <person name="Madeira A.M.B.N."/>
            <person name="Martinez-Rossi N.M."/>
            <person name="Martins E.C."/>
            <person name="Meidanis J."/>
            <person name="Menck C.F.M."/>
            <person name="Miyaki C.Y."/>
            <person name="Moon D.H."/>
            <person name="Moreira L.M."/>
            <person name="Novo M.T.M."/>
            <person name="Okura V.K."/>
            <person name="Oliveira M.C."/>
            <person name="Oliveira V.R."/>
            <person name="Pereira H.A."/>
            <person name="Rossi A."/>
            <person name="Sena J.A.D."/>
            <person name="Silva C."/>
            <person name="de Souza R.F."/>
            <person name="Spinola L.A.F."/>
            <person name="Takita M.A."/>
            <person name="Tamura R.E."/>
            <person name="Teixeira E.C."/>
            <person name="Tezza R.I.D."/>
            <person name="Trindade dos Santos M."/>
            <person name="Truffi D."/>
            <person name="Tsai S.M."/>
            <person name="White F.F."/>
            <person name="Setubal J.C."/>
            <person name="Kitajima J.P."/>
        </authorList>
    </citation>
    <scope>NUCLEOTIDE SEQUENCE [LARGE SCALE GENOMIC DNA]</scope>
    <source>
        <strain>306</strain>
    </source>
</reference>
<comment type="function">
    <text evidence="1">Protein S19 forms a complex with S13 that binds strongly to the 16S ribosomal RNA.</text>
</comment>
<comment type="similarity">
    <text evidence="1">Belongs to the universal ribosomal protein uS19 family.</text>
</comment>
<name>RS19_XANAC</name>
<evidence type="ECO:0000255" key="1">
    <source>
        <dbReference type="HAMAP-Rule" id="MF_00531"/>
    </source>
</evidence>
<evidence type="ECO:0000305" key="2"/>